<accession>P04656</accession>
<dbReference type="EMBL" id="X00938">
    <property type="protein sequence ID" value="CAA25452.1"/>
    <property type="molecule type" value="mRNA"/>
</dbReference>
<dbReference type="PIR" id="S07130">
    <property type="entry name" value="S07130"/>
</dbReference>
<dbReference type="STRING" id="10141.ENSCPOP00000028967"/>
<dbReference type="InParanoid" id="P04656"/>
<dbReference type="Proteomes" id="UP000005447">
    <property type="component" value="Unassembled WGS sequence"/>
</dbReference>
<dbReference type="GO" id="GO:0005615">
    <property type="term" value="C:extracellular space"/>
    <property type="evidence" value="ECO:0007669"/>
    <property type="project" value="TreeGrafter"/>
</dbReference>
<dbReference type="GO" id="GO:1903496">
    <property type="term" value="P:response to 11-deoxycorticosterone"/>
    <property type="evidence" value="ECO:0007669"/>
    <property type="project" value="TreeGrafter"/>
</dbReference>
<dbReference type="GO" id="GO:1903494">
    <property type="term" value="P:response to dehydroepiandrosterone"/>
    <property type="evidence" value="ECO:0007669"/>
    <property type="project" value="TreeGrafter"/>
</dbReference>
<dbReference type="GO" id="GO:0032355">
    <property type="term" value="P:response to estradiol"/>
    <property type="evidence" value="ECO:0007669"/>
    <property type="project" value="TreeGrafter"/>
</dbReference>
<dbReference type="GO" id="GO:0032570">
    <property type="term" value="P:response to progesterone"/>
    <property type="evidence" value="ECO:0007669"/>
    <property type="project" value="TreeGrafter"/>
</dbReference>
<dbReference type="InterPro" id="IPR026999">
    <property type="entry name" value="Alpha-s1_casein"/>
</dbReference>
<dbReference type="InterPro" id="IPR031305">
    <property type="entry name" value="Casein_CS"/>
</dbReference>
<dbReference type="PANTHER" id="PTHR10240">
    <property type="entry name" value="ALPHA-S1-CASEIN"/>
    <property type="match status" value="1"/>
</dbReference>
<dbReference type="PANTHER" id="PTHR10240:SF0">
    <property type="entry name" value="ALPHA-S1-CASEIN"/>
    <property type="match status" value="1"/>
</dbReference>
<dbReference type="PROSITE" id="PS00306">
    <property type="entry name" value="CASEIN_ALPHA_BETA"/>
    <property type="match status" value="1"/>
</dbReference>
<sequence length="198" mass="23140">MKLLILTCLVASAVAMPKFPFRHTELFQTQRGGSSSSSSSEERLKEENIFKFDQQKELQRKQSEKIKEIISESTEQREASSISSSEEVVPKNTEQKHIPQEDALYQQALEQLSRLIKYHQLQMEVVHAQEQFHRINEHNQAQVKEPMRVFNQLDAYPFAAWYYGPEVQYMSFLPFSSIPQPIFPEDAQNTEVMPEWVM</sequence>
<comment type="function">
    <text>Important role in the capacity of milk to transport calcium phosphate.</text>
</comment>
<comment type="subcellular location">
    <subcellularLocation>
        <location>Secreted</location>
    </subcellularLocation>
</comment>
<comment type="tissue specificity">
    <text>Mammary gland specific. Secreted in milk.</text>
</comment>
<comment type="similarity">
    <text evidence="7">Belongs to the alpha-casein family.</text>
</comment>
<name>CASA1_CAVPO</name>
<keyword id="KW-0494">Milk protein</keyword>
<keyword id="KW-0597">Phosphoprotein</keyword>
<keyword id="KW-1185">Reference proteome</keyword>
<keyword id="KW-0964">Secreted</keyword>
<keyword id="KW-0732">Signal</keyword>
<feature type="signal peptide" evidence="1">
    <location>
        <begin position="1"/>
        <end position="15"/>
    </location>
</feature>
<feature type="chain" id="PRO_0000004449" description="Alpha-S1-casein">
    <location>
        <begin position="16"/>
        <end position="198"/>
    </location>
</feature>
<feature type="region of interest" description="Disordered" evidence="6">
    <location>
        <begin position="28"/>
        <end position="47"/>
    </location>
</feature>
<feature type="region of interest" description="Disordered" evidence="6">
    <location>
        <begin position="71"/>
        <end position="97"/>
    </location>
</feature>
<feature type="modified residue" description="Phosphoserine" evidence="2">
    <location>
        <position position="39"/>
    </location>
</feature>
<feature type="modified residue" description="Phosphoserine" evidence="5">
    <location>
        <position position="80"/>
    </location>
</feature>
<feature type="modified residue" description="Phosphoserine" evidence="4">
    <location>
        <position position="81"/>
    </location>
</feature>
<feature type="modified residue" description="Phosphoserine" evidence="4">
    <location>
        <position position="83"/>
    </location>
</feature>
<feature type="modified residue" description="Phosphoserine" evidence="3">
    <location>
        <position position="84"/>
    </location>
</feature>
<feature type="modified residue" description="Phosphoserine" evidence="4">
    <location>
        <position position="85"/>
    </location>
</feature>
<gene>
    <name type="primary">CSN1S1</name>
</gene>
<proteinExistence type="evidence at transcript level"/>
<reference key="1">
    <citation type="journal article" date="1984" name="Biochem. J.">
        <title>Nucleotide sequence determination of guinea-pig casein B mRNA reveals homology with bovine and rat alpha s1 caseins and conservation of the non-coding regions of the mRNA.</title>
        <authorList>
            <person name="Hall L."/>
            <person name="Laird J.E."/>
            <person name="Craig R.K."/>
        </authorList>
    </citation>
    <scope>NUCLEOTIDE SEQUENCE [MRNA]</scope>
</reference>
<evidence type="ECO:0000250" key="1"/>
<evidence type="ECO:0000250" key="2">
    <source>
        <dbReference type="UniProtKB" id="O97943"/>
    </source>
</evidence>
<evidence type="ECO:0000250" key="3">
    <source>
        <dbReference type="UniProtKB" id="P02662"/>
    </source>
</evidence>
<evidence type="ECO:0000250" key="4">
    <source>
        <dbReference type="UniProtKB" id="P04653"/>
    </source>
</evidence>
<evidence type="ECO:0000250" key="5">
    <source>
        <dbReference type="UniProtKB" id="P47710"/>
    </source>
</evidence>
<evidence type="ECO:0000256" key="6">
    <source>
        <dbReference type="SAM" id="MobiDB-lite"/>
    </source>
</evidence>
<evidence type="ECO:0000305" key="7"/>
<organism>
    <name type="scientific">Cavia porcellus</name>
    <name type="common">Guinea pig</name>
    <dbReference type="NCBI Taxonomy" id="10141"/>
    <lineage>
        <taxon>Eukaryota</taxon>
        <taxon>Metazoa</taxon>
        <taxon>Chordata</taxon>
        <taxon>Craniata</taxon>
        <taxon>Vertebrata</taxon>
        <taxon>Euteleostomi</taxon>
        <taxon>Mammalia</taxon>
        <taxon>Eutheria</taxon>
        <taxon>Euarchontoglires</taxon>
        <taxon>Glires</taxon>
        <taxon>Rodentia</taxon>
        <taxon>Hystricomorpha</taxon>
        <taxon>Caviidae</taxon>
        <taxon>Cavia</taxon>
    </lineage>
</organism>
<protein>
    <recommendedName>
        <fullName>Alpha-S1-casein</fullName>
    </recommendedName>
    <alternativeName>
        <fullName>Casein-B</fullName>
    </alternativeName>
</protein>